<keyword id="KW-0001">2Fe-2S</keyword>
<keyword id="KW-0028">Amino-acid biosynthesis</keyword>
<keyword id="KW-0100">Branched-chain amino acid biosynthesis</keyword>
<keyword id="KW-0408">Iron</keyword>
<keyword id="KW-0411">Iron-sulfur</keyword>
<keyword id="KW-0456">Lyase</keyword>
<keyword id="KW-0460">Magnesium</keyword>
<keyword id="KW-0479">Metal-binding</keyword>
<name>ILVD_XYLF2</name>
<gene>
    <name evidence="1" type="primary">ilvD</name>
    <name type="ordered locus">XfasM23_0066</name>
</gene>
<sequence>MPEYRSKTSTYGRNMAGARALWRATGMKDDDFQKPIIAIANSFTQFVPGHVHLKDLGQLVAREIERLGGVAKEFNTIAVDDGIAMGHDGMLYSLPSREIIADSVEYMANAHCADALVCISNCDKITPGMLMASLRLNIPTVFVSGGPMEAGKTTLADHKLDLVDAMVLAADPHASDEEVATVERSACPTCGSCSGMFTANSMNCLTEALGLSLPGNGTVVATHSDRKQLFLNAGRTVIELCHRWYGAEDATALPRGIATFAAFENAITLDIAMGGSTNTILHLLAAAQEAEVSFTMQDIDRLSRNVPQLCKVAPNTQKYHIEDVHRAGGIFGILAELARGNLLHTDVATVHSKTLGEAIATWDIIGTQDEAVHTFYKAGSAGIPTQVAFSQSTRWPSLDTDRTEGCIRDMEHAFSKEGGLAVLYGNIAQDGCVVKTAGVDASIHVFEGSALVYESQEAAVKGILSDEVQPGMIVVIRYEGPKGGPGMQEMLYPTSYLKSKGLGKQCALFTDGRFSGGTSGLSIGHASPEAAAGGAIGLIRDGDRIRIDIPQRAINVLISEEELASRRLEQHAIGWKPAQSRTRKVSSALKAYALLATSADKGAVRNKTLL</sequence>
<organism>
    <name type="scientific">Xylella fastidiosa (strain M23)</name>
    <dbReference type="NCBI Taxonomy" id="405441"/>
    <lineage>
        <taxon>Bacteria</taxon>
        <taxon>Pseudomonadati</taxon>
        <taxon>Pseudomonadota</taxon>
        <taxon>Gammaproteobacteria</taxon>
        <taxon>Lysobacterales</taxon>
        <taxon>Lysobacteraceae</taxon>
        <taxon>Xylella</taxon>
    </lineage>
</organism>
<reference key="1">
    <citation type="journal article" date="2010" name="J. Bacteriol.">
        <title>Whole genome sequences of two Xylella fastidiosa strains (M12 and M23) causing almond leaf scorch disease in California.</title>
        <authorList>
            <person name="Chen J."/>
            <person name="Xie G."/>
            <person name="Han S."/>
            <person name="Chertkov O."/>
            <person name="Sims D."/>
            <person name="Civerolo E.L."/>
        </authorList>
    </citation>
    <scope>NUCLEOTIDE SEQUENCE [LARGE SCALE GENOMIC DNA]</scope>
    <source>
        <strain>M23</strain>
    </source>
</reference>
<dbReference type="EC" id="4.2.1.9" evidence="1"/>
<dbReference type="EMBL" id="CP001011">
    <property type="protein sequence ID" value="ACB91523.1"/>
    <property type="molecule type" value="Genomic_DNA"/>
</dbReference>
<dbReference type="RefSeq" id="WP_004087662.1">
    <property type="nucleotide sequence ID" value="NC_010577.1"/>
</dbReference>
<dbReference type="SMR" id="B2I699"/>
<dbReference type="GeneID" id="93903765"/>
<dbReference type="KEGG" id="xfn:XfasM23_0066"/>
<dbReference type="HOGENOM" id="CLU_014271_4_2_6"/>
<dbReference type="UniPathway" id="UPA00047">
    <property type="reaction ID" value="UER00057"/>
</dbReference>
<dbReference type="UniPathway" id="UPA00049">
    <property type="reaction ID" value="UER00061"/>
</dbReference>
<dbReference type="Proteomes" id="UP000001698">
    <property type="component" value="Chromosome"/>
</dbReference>
<dbReference type="GO" id="GO:0005829">
    <property type="term" value="C:cytosol"/>
    <property type="evidence" value="ECO:0007669"/>
    <property type="project" value="TreeGrafter"/>
</dbReference>
<dbReference type="GO" id="GO:0051537">
    <property type="term" value="F:2 iron, 2 sulfur cluster binding"/>
    <property type="evidence" value="ECO:0007669"/>
    <property type="project" value="UniProtKB-UniRule"/>
</dbReference>
<dbReference type="GO" id="GO:0004160">
    <property type="term" value="F:dihydroxy-acid dehydratase activity"/>
    <property type="evidence" value="ECO:0007669"/>
    <property type="project" value="UniProtKB-UniRule"/>
</dbReference>
<dbReference type="GO" id="GO:0000287">
    <property type="term" value="F:magnesium ion binding"/>
    <property type="evidence" value="ECO:0007669"/>
    <property type="project" value="UniProtKB-UniRule"/>
</dbReference>
<dbReference type="GO" id="GO:0009097">
    <property type="term" value="P:isoleucine biosynthetic process"/>
    <property type="evidence" value="ECO:0007669"/>
    <property type="project" value="UniProtKB-UniRule"/>
</dbReference>
<dbReference type="GO" id="GO:0009099">
    <property type="term" value="P:L-valine biosynthetic process"/>
    <property type="evidence" value="ECO:0007669"/>
    <property type="project" value="UniProtKB-UniRule"/>
</dbReference>
<dbReference type="FunFam" id="3.50.30.80:FF:000001">
    <property type="entry name" value="Dihydroxy-acid dehydratase"/>
    <property type="match status" value="1"/>
</dbReference>
<dbReference type="Gene3D" id="3.50.30.80">
    <property type="entry name" value="IlvD/EDD C-terminal domain-like"/>
    <property type="match status" value="1"/>
</dbReference>
<dbReference type="HAMAP" id="MF_00012">
    <property type="entry name" value="IlvD"/>
    <property type="match status" value="1"/>
</dbReference>
<dbReference type="InterPro" id="IPR042096">
    <property type="entry name" value="Dihydro-acid_dehy_C"/>
</dbReference>
<dbReference type="InterPro" id="IPR004404">
    <property type="entry name" value="DihydroxyA_deHydtase"/>
</dbReference>
<dbReference type="InterPro" id="IPR020558">
    <property type="entry name" value="DiOHA_6PGluconate_deHydtase_CS"/>
</dbReference>
<dbReference type="InterPro" id="IPR056740">
    <property type="entry name" value="ILV_EDD_C"/>
</dbReference>
<dbReference type="InterPro" id="IPR000581">
    <property type="entry name" value="ILV_EDD_N"/>
</dbReference>
<dbReference type="InterPro" id="IPR037237">
    <property type="entry name" value="IlvD/EDD_N"/>
</dbReference>
<dbReference type="NCBIfam" id="TIGR00110">
    <property type="entry name" value="ilvD"/>
    <property type="match status" value="1"/>
</dbReference>
<dbReference type="NCBIfam" id="NF009103">
    <property type="entry name" value="PRK12448.1"/>
    <property type="match status" value="1"/>
</dbReference>
<dbReference type="PANTHER" id="PTHR43661">
    <property type="entry name" value="D-XYLONATE DEHYDRATASE"/>
    <property type="match status" value="1"/>
</dbReference>
<dbReference type="PANTHER" id="PTHR43661:SF3">
    <property type="entry name" value="D-XYLONATE DEHYDRATASE YAGF-RELATED"/>
    <property type="match status" value="1"/>
</dbReference>
<dbReference type="Pfam" id="PF24877">
    <property type="entry name" value="ILV_EDD_C"/>
    <property type="match status" value="1"/>
</dbReference>
<dbReference type="Pfam" id="PF00920">
    <property type="entry name" value="ILVD_EDD_N"/>
    <property type="match status" value="1"/>
</dbReference>
<dbReference type="SUPFAM" id="SSF143975">
    <property type="entry name" value="IlvD/EDD N-terminal domain-like"/>
    <property type="match status" value="1"/>
</dbReference>
<dbReference type="SUPFAM" id="SSF52016">
    <property type="entry name" value="LeuD/IlvD-like"/>
    <property type="match status" value="1"/>
</dbReference>
<dbReference type="PROSITE" id="PS00886">
    <property type="entry name" value="ILVD_EDD_1"/>
    <property type="match status" value="1"/>
</dbReference>
<dbReference type="PROSITE" id="PS00887">
    <property type="entry name" value="ILVD_EDD_2"/>
    <property type="match status" value="1"/>
</dbReference>
<comment type="function">
    <text evidence="1">Functions in the biosynthesis of branched-chain amino acids. Catalyzes the dehydration of (2R,3R)-2,3-dihydroxy-3-methylpentanoate (2,3-dihydroxy-3-methylvalerate) into 2-oxo-3-methylpentanoate (2-oxo-3-methylvalerate) and of (2R)-2,3-dihydroxy-3-methylbutanoate (2,3-dihydroxyisovalerate) into 2-oxo-3-methylbutanoate (2-oxoisovalerate), the penultimate precursor to L-isoleucine and L-valine, respectively.</text>
</comment>
<comment type="catalytic activity">
    <reaction evidence="1">
        <text>(2R)-2,3-dihydroxy-3-methylbutanoate = 3-methyl-2-oxobutanoate + H2O</text>
        <dbReference type="Rhea" id="RHEA:24809"/>
        <dbReference type="ChEBI" id="CHEBI:11851"/>
        <dbReference type="ChEBI" id="CHEBI:15377"/>
        <dbReference type="ChEBI" id="CHEBI:49072"/>
        <dbReference type="EC" id="4.2.1.9"/>
    </reaction>
    <physiologicalReaction direction="left-to-right" evidence="1">
        <dbReference type="Rhea" id="RHEA:24810"/>
    </physiologicalReaction>
</comment>
<comment type="catalytic activity">
    <reaction evidence="1">
        <text>(2R,3R)-2,3-dihydroxy-3-methylpentanoate = (S)-3-methyl-2-oxopentanoate + H2O</text>
        <dbReference type="Rhea" id="RHEA:27694"/>
        <dbReference type="ChEBI" id="CHEBI:15377"/>
        <dbReference type="ChEBI" id="CHEBI:35146"/>
        <dbReference type="ChEBI" id="CHEBI:49258"/>
        <dbReference type="EC" id="4.2.1.9"/>
    </reaction>
    <physiologicalReaction direction="left-to-right" evidence="1">
        <dbReference type="Rhea" id="RHEA:27695"/>
    </physiologicalReaction>
</comment>
<comment type="cofactor">
    <cofactor evidence="1">
        <name>[2Fe-2S] cluster</name>
        <dbReference type="ChEBI" id="CHEBI:190135"/>
    </cofactor>
    <text evidence="1">Binds 1 [2Fe-2S] cluster per subunit. This cluster acts as a Lewis acid cofactor.</text>
</comment>
<comment type="cofactor">
    <cofactor evidence="1">
        <name>Mg(2+)</name>
        <dbReference type="ChEBI" id="CHEBI:18420"/>
    </cofactor>
</comment>
<comment type="pathway">
    <text evidence="1">Amino-acid biosynthesis; L-isoleucine biosynthesis; L-isoleucine from 2-oxobutanoate: step 3/4.</text>
</comment>
<comment type="pathway">
    <text evidence="1">Amino-acid biosynthesis; L-valine biosynthesis; L-valine from pyruvate: step 3/4.</text>
</comment>
<comment type="subunit">
    <text evidence="1">Homodimer.</text>
</comment>
<comment type="similarity">
    <text evidence="1">Belongs to the IlvD/Edd family.</text>
</comment>
<protein>
    <recommendedName>
        <fullName evidence="1">Dihydroxy-acid dehydratase</fullName>
        <shortName evidence="1">DAD</shortName>
        <ecNumber evidence="1">4.2.1.9</ecNumber>
    </recommendedName>
</protein>
<accession>B2I699</accession>
<feature type="chain" id="PRO_1000089432" description="Dihydroxy-acid dehydratase">
    <location>
        <begin position="1"/>
        <end position="610"/>
    </location>
</feature>
<feature type="active site" description="Proton acceptor" evidence="1">
    <location>
        <position position="515"/>
    </location>
</feature>
<feature type="binding site" evidence="1">
    <location>
        <position position="81"/>
    </location>
    <ligand>
        <name>Mg(2+)</name>
        <dbReference type="ChEBI" id="CHEBI:18420"/>
    </ligand>
</feature>
<feature type="binding site" evidence="1">
    <location>
        <position position="122"/>
    </location>
    <ligand>
        <name>[2Fe-2S] cluster</name>
        <dbReference type="ChEBI" id="CHEBI:190135"/>
    </ligand>
</feature>
<feature type="binding site" evidence="1">
    <location>
        <position position="123"/>
    </location>
    <ligand>
        <name>Mg(2+)</name>
        <dbReference type="ChEBI" id="CHEBI:18420"/>
    </ligand>
</feature>
<feature type="binding site" description="via carbamate group" evidence="1">
    <location>
        <position position="124"/>
    </location>
    <ligand>
        <name>Mg(2+)</name>
        <dbReference type="ChEBI" id="CHEBI:18420"/>
    </ligand>
</feature>
<feature type="binding site" evidence="1">
    <location>
        <position position="193"/>
    </location>
    <ligand>
        <name>[2Fe-2S] cluster</name>
        <dbReference type="ChEBI" id="CHEBI:190135"/>
    </ligand>
</feature>
<feature type="binding site" evidence="1">
    <location>
        <position position="489"/>
    </location>
    <ligand>
        <name>Mg(2+)</name>
        <dbReference type="ChEBI" id="CHEBI:18420"/>
    </ligand>
</feature>
<feature type="modified residue" description="N6-carboxylysine" evidence="1">
    <location>
        <position position="124"/>
    </location>
</feature>
<evidence type="ECO:0000255" key="1">
    <source>
        <dbReference type="HAMAP-Rule" id="MF_00012"/>
    </source>
</evidence>
<proteinExistence type="inferred from homology"/>